<comment type="function">
    <text evidence="1">DNA ligase that catalyzes the formation of phosphodiester linkages between 5'-phosphoryl and 3'-hydroxyl groups in double-stranded DNA using NAD as a coenzyme and as the energy source for the reaction. It is essential for DNA replication and repair of damaged DNA.</text>
</comment>
<comment type="catalytic activity">
    <reaction evidence="1">
        <text>NAD(+) + (deoxyribonucleotide)n-3'-hydroxyl + 5'-phospho-(deoxyribonucleotide)m = (deoxyribonucleotide)n+m + AMP + beta-nicotinamide D-nucleotide.</text>
        <dbReference type="EC" id="6.5.1.2"/>
    </reaction>
</comment>
<comment type="cofactor">
    <cofactor evidence="1">
        <name>Mg(2+)</name>
        <dbReference type="ChEBI" id="CHEBI:18420"/>
    </cofactor>
    <cofactor evidence="1">
        <name>Mn(2+)</name>
        <dbReference type="ChEBI" id="CHEBI:29035"/>
    </cofactor>
</comment>
<comment type="similarity">
    <text evidence="1">Belongs to the NAD-dependent DNA ligase family. LigA subfamily.</text>
</comment>
<proteinExistence type="inferred from homology"/>
<reference key="1">
    <citation type="submission" date="2008-05" db="EMBL/GenBank/DDBJ databases">
        <title>Complete genome sequence of Clostridium botulinum E3 str. Alaska E43.</title>
        <authorList>
            <person name="Brinkac L.M."/>
            <person name="Brown J.L."/>
            <person name="Bruce D."/>
            <person name="Detter C."/>
            <person name="Munk C."/>
            <person name="Smith L.A."/>
            <person name="Smith T.J."/>
            <person name="Sutton G."/>
            <person name="Brettin T.S."/>
        </authorList>
    </citation>
    <scope>NUCLEOTIDE SEQUENCE [LARGE SCALE GENOMIC DNA]</scope>
    <source>
        <strain>Alaska E43 / Type E3</strain>
    </source>
</reference>
<gene>
    <name evidence="1" type="primary">ligA</name>
    <name type="ordered locus">CLH_0395</name>
</gene>
<protein>
    <recommendedName>
        <fullName evidence="1">DNA ligase</fullName>
        <ecNumber evidence="1">6.5.1.2</ecNumber>
    </recommendedName>
    <alternativeName>
        <fullName evidence="1">Polydeoxyribonucleotide synthase [NAD(+)]</fullName>
    </alternativeName>
</protein>
<evidence type="ECO:0000255" key="1">
    <source>
        <dbReference type="HAMAP-Rule" id="MF_01588"/>
    </source>
</evidence>
<feature type="chain" id="PRO_0000380340" description="DNA ligase">
    <location>
        <begin position="1"/>
        <end position="667"/>
    </location>
</feature>
<feature type="domain" description="BRCT" evidence="1">
    <location>
        <begin position="587"/>
        <end position="667"/>
    </location>
</feature>
<feature type="active site" description="N6-AMP-lysine intermediate" evidence="1">
    <location>
        <position position="121"/>
    </location>
</feature>
<feature type="binding site" evidence="1">
    <location>
        <begin position="32"/>
        <end position="36"/>
    </location>
    <ligand>
        <name>NAD(+)</name>
        <dbReference type="ChEBI" id="CHEBI:57540"/>
    </ligand>
</feature>
<feature type="binding site" evidence="1">
    <location>
        <begin position="80"/>
        <end position="81"/>
    </location>
    <ligand>
        <name>NAD(+)</name>
        <dbReference type="ChEBI" id="CHEBI:57540"/>
    </ligand>
</feature>
<feature type="binding site" evidence="1">
    <location>
        <position position="143"/>
    </location>
    <ligand>
        <name>NAD(+)</name>
        <dbReference type="ChEBI" id="CHEBI:57540"/>
    </ligand>
</feature>
<feature type="binding site" evidence="1">
    <location>
        <position position="178"/>
    </location>
    <ligand>
        <name>NAD(+)</name>
        <dbReference type="ChEBI" id="CHEBI:57540"/>
    </ligand>
</feature>
<feature type="binding site" evidence="1">
    <location>
        <position position="314"/>
    </location>
    <ligand>
        <name>NAD(+)</name>
        <dbReference type="ChEBI" id="CHEBI:57540"/>
    </ligand>
</feature>
<feature type="binding site" evidence="1">
    <location>
        <position position="407"/>
    </location>
    <ligand>
        <name>Zn(2+)</name>
        <dbReference type="ChEBI" id="CHEBI:29105"/>
    </ligand>
</feature>
<feature type="binding site" evidence="1">
    <location>
        <position position="410"/>
    </location>
    <ligand>
        <name>Zn(2+)</name>
        <dbReference type="ChEBI" id="CHEBI:29105"/>
    </ligand>
</feature>
<feature type="binding site" evidence="1">
    <location>
        <position position="423"/>
    </location>
    <ligand>
        <name>Zn(2+)</name>
        <dbReference type="ChEBI" id="CHEBI:29105"/>
    </ligand>
</feature>
<feature type="binding site" evidence="1">
    <location>
        <position position="429"/>
    </location>
    <ligand>
        <name>Zn(2+)</name>
        <dbReference type="ChEBI" id="CHEBI:29105"/>
    </ligand>
</feature>
<sequence>MVDKIERIKELVEILNKYSYDYYVLDNPSVSDKDYDKKYDELKLLEKETGVVLPYSPTLRIGDIVLDGFNKYTHKGKLWSLDKAQSLDEIKDWHNRNIKFVNDMRAQGEDLPDLKYIATKKFDGLTVNLTYNEEGMLEVSATRGNGEIGENVTAQVKTIKSIPLKLQENHDLFEVHGEAIMTQEAFEKYNSSADSPLKNLRNGAAGALRNLNVKETARRDLSAFFYDVGYKEGYQFKTYLEMMDFIKEKGLPVDDYLKVCVSIEDIKNEIDYIEKIRFDLNYDIDGLVIAIDDIRTRELLGYTVKFPKWAIAYKFEAQEATTKLVDVEWNVGRSGRIGPTAILEPVELAGVTVKRATLNNMDDIKRKGVRIGADVFIRRSNDVIPEIMGTLENTLENSEEIFPPTECPACGSHVVLNGAHYFCENTLSCKPQLVKTIVHYASRDAMNIAGFSEKTAEQLFEKLNIKSISDLYKLKKEDLINLEKFGDKKAENLLNAVEGSKECKLYSFIYALGIPNVGVKTAKDIVNKFKSIDGLKNATFEELVSVQDVGDIVAQDIIEFFKEEKVISTIDELLSLGVNPIFDEVKIVESIFKDKTVVATGTLQNYSRTEIKTKLESLGAKVSGSVSKKTDYVIAGESAGSKLTKAEELGVEVISEEEFEKMLGRES</sequence>
<accession>B2UZ23</accession>
<organism>
    <name type="scientific">Clostridium botulinum (strain Alaska E43 / Type E3)</name>
    <dbReference type="NCBI Taxonomy" id="508767"/>
    <lineage>
        <taxon>Bacteria</taxon>
        <taxon>Bacillati</taxon>
        <taxon>Bacillota</taxon>
        <taxon>Clostridia</taxon>
        <taxon>Eubacteriales</taxon>
        <taxon>Clostridiaceae</taxon>
        <taxon>Clostridium</taxon>
    </lineage>
</organism>
<name>DNLJ_CLOBA</name>
<dbReference type="EC" id="6.5.1.2" evidence="1"/>
<dbReference type="EMBL" id="CP001078">
    <property type="protein sequence ID" value="ACD51207.1"/>
    <property type="molecule type" value="Genomic_DNA"/>
</dbReference>
<dbReference type="RefSeq" id="WP_012449613.1">
    <property type="nucleotide sequence ID" value="NC_010723.1"/>
</dbReference>
<dbReference type="SMR" id="B2UZ23"/>
<dbReference type="KEGG" id="cbt:CLH_0395"/>
<dbReference type="HOGENOM" id="CLU_007764_2_1_9"/>
<dbReference type="GO" id="GO:0005829">
    <property type="term" value="C:cytosol"/>
    <property type="evidence" value="ECO:0007669"/>
    <property type="project" value="TreeGrafter"/>
</dbReference>
<dbReference type="GO" id="GO:0003677">
    <property type="term" value="F:DNA binding"/>
    <property type="evidence" value="ECO:0007669"/>
    <property type="project" value="InterPro"/>
</dbReference>
<dbReference type="GO" id="GO:0003911">
    <property type="term" value="F:DNA ligase (NAD+) activity"/>
    <property type="evidence" value="ECO:0007669"/>
    <property type="project" value="UniProtKB-UniRule"/>
</dbReference>
<dbReference type="GO" id="GO:0046872">
    <property type="term" value="F:metal ion binding"/>
    <property type="evidence" value="ECO:0007669"/>
    <property type="project" value="UniProtKB-KW"/>
</dbReference>
<dbReference type="GO" id="GO:0006281">
    <property type="term" value="P:DNA repair"/>
    <property type="evidence" value="ECO:0007669"/>
    <property type="project" value="UniProtKB-KW"/>
</dbReference>
<dbReference type="GO" id="GO:0006260">
    <property type="term" value="P:DNA replication"/>
    <property type="evidence" value="ECO:0007669"/>
    <property type="project" value="UniProtKB-KW"/>
</dbReference>
<dbReference type="CDD" id="cd17748">
    <property type="entry name" value="BRCT_DNA_ligase_like"/>
    <property type="match status" value="1"/>
</dbReference>
<dbReference type="CDD" id="cd09897">
    <property type="entry name" value="H3TH_FEN1-XPG-like"/>
    <property type="match status" value="1"/>
</dbReference>
<dbReference type="CDD" id="cd00114">
    <property type="entry name" value="LIGANc"/>
    <property type="match status" value="1"/>
</dbReference>
<dbReference type="FunFam" id="1.10.150.20:FF:000006">
    <property type="entry name" value="DNA ligase"/>
    <property type="match status" value="1"/>
</dbReference>
<dbReference type="FunFam" id="1.10.150.20:FF:000007">
    <property type="entry name" value="DNA ligase"/>
    <property type="match status" value="1"/>
</dbReference>
<dbReference type="FunFam" id="2.40.50.140:FF:000012">
    <property type="entry name" value="DNA ligase"/>
    <property type="match status" value="1"/>
</dbReference>
<dbReference type="Gene3D" id="1.10.150.20">
    <property type="entry name" value="5' to 3' exonuclease, C-terminal subdomain"/>
    <property type="match status" value="2"/>
</dbReference>
<dbReference type="Gene3D" id="3.40.50.10190">
    <property type="entry name" value="BRCT domain"/>
    <property type="match status" value="1"/>
</dbReference>
<dbReference type="Gene3D" id="3.30.470.30">
    <property type="entry name" value="DNA ligase/mRNA capping enzyme"/>
    <property type="match status" value="1"/>
</dbReference>
<dbReference type="Gene3D" id="1.10.287.610">
    <property type="entry name" value="Helix hairpin bin"/>
    <property type="match status" value="1"/>
</dbReference>
<dbReference type="Gene3D" id="2.40.50.140">
    <property type="entry name" value="Nucleic acid-binding proteins"/>
    <property type="match status" value="1"/>
</dbReference>
<dbReference type="HAMAP" id="MF_01588">
    <property type="entry name" value="DNA_ligase_A"/>
    <property type="match status" value="1"/>
</dbReference>
<dbReference type="InterPro" id="IPR001357">
    <property type="entry name" value="BRCT_dom"/>
</dbReference>
<dbReference type="InterPro" id="IPR036420">
    <property type="entry name" value="BRCT_dom_sf"/>
</dbReference>
<dbReference type="InterPro" id="IPR041663">
    <property type="entry name" value="DisA/LigA_HHH"/>
</dbReference>
<dbReference type="InterPro" id="IPR001679">
    <property type="entry name" value="DNA_ligase"/>
</dbReference>
<dbReference type="InterPro" id="IPR013839">
    <property type="entry name" value="DNAligase_adenylation"/>
</dbReference>
<dbReference type="InterPro" id="IPR013840">
    <property type="entry name" value="DNAligase_N"/>
</dbReference>
<dbReference type="InterPro" id="IPR003583">
    <property type="entry name" value="Hlx-hairpin-Hlx_DNA-bd_motif"/>
</dbReference>
<dbReference type="InterPro" id="IPR012340">
    <property type="entry name" value="NA-bd_OB-fold"/>
</dbReference>
<dbReference type="InterPro" id="IPR004150">
    <property type="entry name" value="NAD_DNA_ligase_OB"/>
</dbReference>
<dbReference type="InterPro" id="IPR010994">
    <property type="entry name" value="RuvA_2-like"/>
</dbReference>
<dbReference type="NCBIfam" id="TIGR00575">
    <property type="entry name" value="dnlj"/>
    <property type="match status" value="1"/>
</dbReference>
<dbReference type="NCBIfam" id="NF005932">
    <property type="entry name" value="PRK07956.1"/>
    <property type="match status" value="1"/>
</dbReference>
<dbReference type="PANTHER" id="PTHR23389">
    <property type="entry name" value="CHROMOSOME TRANSMISSION FIDELITY FACTOR 18"/>
    <property type="match status" value="1"/>
</dbReference>
<dbReference type="PANTHER" id="PTHR23389:SF9">
    <property type="entry name" value="DNA LIGASE"/>
    <property type="match status" value="1"/>
</dbReference>
<dbReference type="Pfam" id="PF00533">
    <property type="entry name" value="BRCT"/>
    <property type="match status" value="1"/>
</dbReference>
<dbReference type="Pfam" id="PF01653">
    <property type="entry name" value="DNA_ligase_aden"/>
    <property type="match status" value="1"/>
</dbReference>
<dbReference type="Pfam" id="PF03120">
    <property type="entry name" value="DNA_ligase_OB"/>
    <property type="match status" value="1"/>
</dbReference>
<dbReference type="Pfam" id="PF12826">
    <property type="entry name" value="HHH_2"/>
    <property type="match status" value="1"/>
</dbReference>
<dbReference type="Pfam" id="PF14520">
    <property type="entry name" value="HHH_5"/>
    <property type="match status" value="1"/>
</dbReference>
<dbReference type="PIRSF" id="PIRSF001604">
    <property type="entry name" value="LigA"/>
    <property type="match status" value="1"/>
</dbReference>
<dbReference type="SMART" id="SM00292">
    <property type="entry name" value="BRCT"/>
    <property type="match status" value="1"/>
</dbReference>
<dbReference type="SMART" id="SM00278">
    <property type="entry name" value="HhH1"/>
    <property type="match status" value="4"/>
</dbReference>
<dbReference type="SMART" id="SM00532">
    <property type="entry name" value="LIGANc"/>
    <property type="match status" value="1"/>
</dbReference>
<dbReference type="SUPFAM" id="SSF52113">
    <property type="entry name" value="BRCT domain"/>
    <property type="match status" value="1"/>
</dbReference>
<dbReference type="SUPFAM" id="SSF56091">
    <property type="entry name" value="DNA ligase/mRNA capping enzyme, catalytic domain"/>
    <property type="match status" value="1"/>
</dbReference>
<dbReference type="SUPFAM" id="SSF50249">
    <property type="entry name" value="Nucleic acid-binding proteins"/>
    <property type="match status" value="1"/>
</dbReference>
<dbReference type="SUPFAM" id="SSF47781">
    <property type="entry name" value="RuvA domain 2-like"/>
    <property type="match status" value="1"/>
</dbReference>
<dbReference type="PROSITE" id="PS50172">
    <property type="entry name" value="BRCT"/>
    <property type="match status" value="1"/>
</dbReference>
<keyword id="KW-0227">DNA damage</keyword>
<keyword id="KW-0234">DNA repair</keyword>
<keyword id="KW-0235">DNA replication</keyword>
<keyword id="KW-0436">Ligase</keyword>
<keyword id="KW-0460">Magnesium</keyword>
<keyword id="KW-0464">Manganese</keyword>
<keyword id="KW-0479">Metal-binding</keyword>
<keyword id="KW-0520">NAD</keyword>
<keyword id="KW-0862">Zinc</keyword>